<proteinExistence type="inferred from homology"/>
<reference key="1">
    <citation type="journal article" date="1978" name="Nucleic Acids Res.">
        <title>Nucleotide sequence of bacteriophage fd DNA.</title>
        <authorList>
            <person name="Beck E."/>
            <person name="Sommer R."/>
            <person name="Auerswald E.A."/>
            <person name="Kurz C."/>
            <person name="Zink B."/>
            <person name="Osterburg G."/>
            <person name="Schaller H."/>
            <person name="Sugimoto K."/>
            <person name="Sugisaki H."/>
            <person name="Okamoto T."/>
            <person name="Takanami M."/>
        </authorList>
    </citation>
    <scope>NUCLEOTIDE SEQUENCE [GENOMIC DNA]</scope>
    <source>
        <strain>478 / Heidelberg</strain>
    </source>
</reference>
<reference key="2">
    <citation type="journal article" date="1988" name="J. Biol. Chem.">
        <title>An amino acid sequence which directs membrane insertion causes loss of membrane potential.</title>
        <authorList>
            <person name="Horabin J.I."/>
            <person name="Webster R.E."/>
        </authorList>
    </citation>
    <scope>NUCLEOTIDE SEQUENCE [GENOMIC DNA]</scope>
</reference>
<gene>
    <name type="primary">I</name>
</gene>
<sequence length="348" mass="39537">MAVYFVTGKLGSGKTLVSVGKIQDKIVAGCKIATNLDLRLQNLPQVGRFAKTPRVLRIPDKPSISDLLAIGRGNDSYDENKNGLLVLDECGTWFNTRSWNDKERQPIIDWFLHARKLGWDIIFLVQDLSIVDKQARSALAEHVVYCRRLDRITLPFVGTLYSLVTGSKMPLPKLHVGVVKYGDSQLSPTVERWLYTGKNLYNAYDTKQAFSSNYDSGVYSYLTPYLSHGRYFKPLNLGQKMKLTKIYLKKFSRVLCLAIGFASAFTYSYITQPKPEVKKVVSQTYDFDKFTIDSSQRLNLSYRYVFKDSKGKLINSDDLQKQGYSITYIDLCTVSIKKGNSNEIVKCN</sequence>
<organism>
    <name type="scientific">Enterobacteria phage fd</name>
    <name type="common">Bacteriophage fd</name>
    <dbReference type="NCBI Taxonomy" id="2847073"/>
    <lineage>
        <taxon>Viruses</taxon>
        <taxon>Monodnaviria</taxon>
        <taxon>Loebvirae</taxon>
        <taxon>Hofneiviricota</taxon>
        <taxon>Faserviricetes</taxon>
        <taxon>Tubulavirales</taxon>
        <taxon>Inoviridae</taxon>
        <taxon>Inovirus</taxon>
        <taxon>Enterobacteria phage M13</taxon>
    </lineage>
</organism>
<protein>
    <recommendedName>
        <fullName>Gene 1 protein</fullName>
    </recommendedName>
    <alternativeName>
        <fullName>G1P</fullName>
    </alternativeName>
</protein>
<accession>P03655</accession>
<comment type="function">
    <text evidence="1">Isoform G1P plays an essential role in phage assembly. It is required to increase the number of adhesion zones between the inner and outer membranes of the host cell. The extrusion of neo-synthesized phages occurs at these adhesion sites. May be involved with G4P in creating zone through which the phage assembled and extruded (By similarity).</text>
</comment>
<comment type="function">
    <text evidence="1">Isoform G11P is also involved in phage assembly, probably playing a structural role in the formation of the phage assembly site.</text>
</comment>
<comment type="subunit">
    <text evidence="1">Interacts with G4P; this interaction results in a complex that spans the inner an outer host membranes.</text>
</comment>
<comment type="subcellular location">
    <subcellularLocation>
        <location evidence="3">Host membrane</location>
        <topology evidence="3">Single-pass membrane protein</topology>
    </subcellularLocation>
</comment>
<comment type="alternative products">
    <event type="alternative initiation"/>
    <isoform>
        <id>P03655-1</id>
        <name>G1P</name>
        <name>Gene 1 protein</name>
        <sequence type="displayed"/>
    </isoform>
    <isoform>
        <id>P03655-2</id>
        <name>G11P</name>
        <name>Gene 11 protein</name>
        <sequence type="described" ref="VSP_037570"/>
    </isoform>
</comment>
<comment type="similarity">
    <text evidence="3">Belongs to the inovirus G1P protein family.</text>
</comment>
<dbReference type="EMBL" id="J02451">
    <property type="protein sequence ID" value="AAA32311.1"/>
    <property type="molecule type" value="Genomic_DNA"/>
</dbReference>
<dbReference type="PIR" id="A04262">
    <property type="entry name" value="Z1BPFD"/>
</dbReference>
<dbReference type="KEGG" id="vg:22475006"/>
<dbReference type="Proteomes" id="UP000001836">
    <property type="component" value="Genome"/>
</dbReference>
<dbReference type="GO" id="GO:0033644">
    <property type="term" value="C:host cell membrane"/>
    <property type="evidence" value="ECO:0007669"/>
    <property type="project" value="UniProtKB-SubCell"/>
</dbReference>
<dbReference type="GO" id="GO:0016020">
    <property type="term" value="C:membrane"/>
    <property type="evidence" value="ECO:0007669"/>
    <property type="project" value="UniProtKB-KW"/>
</dbReference>
<dbReference type="GO" id="GO:0005524">
    <property type="term" value="F:ATP binding"/>
    <property type="evidence" value="ECO:0007669"/>
    <property type="project" value="UniProtKB-KW"/>
</dbReference>
<dbReference type="GO" id="GO:0099045">
    <property type="term" value="P:viral extrusion"/>
    <property type="evidence" value="ECO:0007669"/>
    <property type="project" value="UniProtKB-KW"/>
</dbReference>
<dbReference type="Gene3D" id="3.40.50.300">
    <property type="entry name" value="P-loop containing nucleotide triphosphate hydrolases"/>
    <property type="match status" value="1"/>
</dbReference>
<dbReference type="InterPro" id="IPR027417">
    <property type="entry name" value="P-loop_NTPase"/>
</dbReference>
<dbReference type="InterPro" id="IPR008900">
    <property type="entry name" value="Zot_N"/>
</dbReference>
<dbReference type="Pfam" id="PF05707">
    <property type="entry name" value="Zot"/>
    <property type="match status" value="1"/>
</dbReference>
<feature type="chain" id="PRO_0000098202" description="Gene 1 protein">
    <location>
        <begin position="1"/>
        <end position="348"/>
    </location>
</feature>
<feature type="topological domain" description="Cytoplasmic" evidence="3">
    <location>
        <begin position="1"/>
        <end position="252"/>
    </location>
</feature>
<feature type="transmembrane region" description="Helical; Signal-anchor for type II membrane protein" evidence="3">
    <location>
        <begin position="253"/>
        <end position="273"/>
    </location>
</feature>
<feature type="topological domain" description="Periplasmic" evidence="3">
    <location>
        <begin position="274"/>
        <end position="348"/>
    </location>
</feature>
<feature type="binding site" evidence="2">
    <location>
        <begin position="8"/>
        <end position="15"/>
    </location>
    <ligand>
        <name>ATP</name>
        <dbReference type="ChEBI" id="CHEBI:30616"/>
    </ligand>
</feature>
<feature type="splice variant" id="VSP_037570" description="In isoform G11P." evidence="3">
    <location>
        <begin position="1"/>
        <end position="240"/>
    </location>
</feature>
<organismHost>
    <name type="scientific">Escherichia coli</name>
    <dbReference type="NCBI Taxonomy" id="562"/>
</organismHost>
<keyword id="KW-0024">Alternative initiation</keyword>
<keyword id="KW-0067">ATP-binding</keyword>
<keyword id="KW-1043">Host membrane</keyword>
<keyword id="KW-0472">Membrane</keyword>
<keyword id="KW-0547">Nucleotide-binding</keyword>
<keyword id="KW-0735">Signal-anchor</keyword>
<keyword id="KW-0812">Transmembrane</keyword>
<keyword id="KW-1133">Transmembrane helix</keyword>
<keyword id="KW-1249">Viral extrusion</keyword>
<keyword id="KW-1188">Viral release from host cell</keyword>
<evidence type="ECO:0000250" key="1"/>
<evidence type="ECO:0000255" key="2"/>
<evidence type="ECO:0000305" key="3"/>
<name>G1P_BPFD</name>